<name>NANM_SALTY</name>
<gene>
    <name evidence="1" type="primary">nanM</name>
    <name type="ordered locus">STM1130</name>
</gene>
<evidence type="ECO:0000255" key="1">
    <source>
        <dbReference type="HAMAP-Rule" id="MF_01195"/>
    </source>
</evidence>
<proteinExistence type="inferred from homology"/>
<comment type="function">
    <text evidence="1">Converts alpha-N-acetylneuranimic acid (Neu5Ac) to the beta-anomer, accelerating the equilibrium between the alpha- and beta-anomers. Probably facilitates sialidase-negative bacteria to compete successfully for limited amounts of extracellular Neu5Ac, which is likely taken up in the beta-anomer. In addition, the rapid removal of sialic acid from solution might be advantageous to the bacterium to damp down host responses.</text>
</comment>
<comment type="catalytic activity">
    <reaction evidence="1">
        <text>N-acetyl-alpha-neuraminate = N-acetyl-beta-neuraminate</text>
        <dbReference type="Rhea" id="RHEA:25233"/>
        <dbReference type="ChEBI" id="CHEBI:58705"/>
        <dbReference type="ChEBI" id="CHEBI:58770"/>
        <dbReference type="EC" id="5.1.3.24"/>
    </reaction>
</comment>
<comment type="subunit">
    <text evidence="1">Homodimer.</text>
</comment>
<comment type="subcellular location">
    <subcellularLocation>
        <location evidence="1">Periplasm</location>
    </subcellularLocation>
</comment>
<comment type="similarity">
    <text evidence="1">Belongs to the NanM family.</text>
</comment>
<dbReference type="EC" id="5.1.3.24" evidence="1"/>
<dbReference type="EMBL" id="AE006468">
    <property type="protein sequence ID" value="AAL20061.1"/>
    <property type="molecule type" value="Genomic_DNA"/>
</dbReference>
<dbReference type="RefSeq" id="NP_460102.1">
    <property type="nucleotide sequence ID" value="NC_003197.2"/>
</dbReference>
<dbReference type="RefSeq" id="WP_000525751.1">
    <property type="nucleotide sequence ID" value="NC_003197.2"/>
</dbReference>
<dbReference type="SMR" id="Q8ZQ34"/>
<dbReference type="STRING" id="99287.STM1130"/>
<dbReference type="PaxDb" id="99287-STM1130"/>
<dbReference type="GeneID" id="1252648"/>
<dbReference type="KEGG" id="stm:STM1130"/>
<dbReference type="PATRIC" id="fig|99287.12.peg.1197"/>
<dbReference type="HOGENOM" id="CLU_061535_0_0_6"/>
<dbReference type="OMA" id="FNGFFQD"/>
<dbReference type="PhylomeDB" id="Q8ZQ34"/>
<dbReference type="BioCyc" id="SENT99287:STM1130-MONOMER"/>
<dbReference type="Proteomes" id="UP000001014">
    <property type="component" value="Chromosome"/>
</dbReference>
<dbReference type="GO" id="GO:0042597">
    <property type="term" value="C:periplasmic space"/>
    <property type="evidence" value="ECO:0007669"/>
    <property type="project" value="UniProtKB-SubCell"/>
</dbReference>
<dbReference type="GO" id="GO:0016857">
    <property type="term" value="F:racemase and epimerase activity, acting on carbohydrates and derivatives"/>
    <property type="evidence" value="ECO:0007669"/>
    <property type="project" value="UniProtKB-UniRule"/>
</dbReference>
<dbReference type="Gene3D" id="2.120.10.80">
    <property type="entry name" value="Kelch-type beta propeller"/>
    <property type="match status" value="2"/>
</dbReference>
<dbReference type="HAMAP" id="MF_01195">
    <property type="entry name" value="NanM"/>
    <property type="match status" value="1"/>
</dbReference>
<dbReference type="InterPro" id="IPR015915">
    <property type="entry name" value="Kelch-typ_b-propeller"/>
</dbReference>
<dbReference type="InterPro" id="IPR056734">
    <property type="entry name" value="NANM"/>
</dbReference>
<dbReference type="InterPro" id="IPR019936">
    <property type="entry name" value="NanM_proteobact"/>
</dbReference>
<dbReference type="NCBIfam" id="TIGR03547">
    <property type="entry name" value="muta_rot_YjhT"/>
    <property type="match status" value="1"/>
</dbReference>
<dbReference type="NCBIfam" id="NF010730">
    <property type="entry name" value="PRK14131.1"/>
    <property type="match status" value="1"/>
</dbReference>
<dbReference type="PANTHER" id="PTHR46093">
    <property type="entry name" value="ACYL-COA-BINDING DOMAIN-CONTAINING PROTEIN 5"/>
    <property type="match status" value="1"/>
</dbReference>
<dbReference type="PANTHER" id="PTHR46093:SF18">
    <property type="entry name" value="FIBRONECTIN TYPE-III DOMAIN-CONTAINING PROTEIN"/>
    <property type="match status" value="1"/>
</dbReference>
<dbReference type="Pfam" id="PF24996">
    <property type="entry name" value="NANM"/>
    <property type="match status" value="1"/>
</dbReference>
<dbReference type="SUPFAM" id="SSF117281">
    <property type="entry name" value="Kelch motif"/>
    <property type="match status" value="1"/>
</dbReference>
<reference key="1">
    <citation type="journal article" date="2001" name="Nature">
        <title>Complete genome sequence of Salmonella enterica serovar Typhimurium LT2.</title>
        <authorList>
            <person name="McClelland M."/>
            <person name="Sanderson K.E."/>
            <person name="Spieth J."/>
            <person name="Clifton S.W."/>
            <person name="Latreille P."/>
            <person name="Courtney L."/>
            <person name="Porwollik S."/>
            <person name="Ali J."/>
            <person name="Dante M."/>
            <person name="Du F."/>
            <person name="Hou S."/>
            <person name="Layman D."/>
            <person name="Leonard S."/>
            <person name="Nguyen C."/>
            <person name="Scott K."/>
            <person name="Holmes A."/>
            <person name="Grewal N."/>
            <person name="Mulvaney E."/>
            <person name="Ryan E."/>
            <person name="Sun H."/>
            <person name="Florea L."/>
            <person name="Miller W."/>
            <person name="Stoneking T."/>
            <person name="Nhan M."/>
            <person name="Waterston R."/>
            <person name="Wilson R.K."/>
        </authorList>
    </citation>
    <scope>NUCLEOTIDE SEQUENCE [LARGE SCALE GENOMIC DNA]</scope>
    <source>
        <strain>LT2 / SGSC1412 / ATCC 700720</strain>
    </source>
</reference>
<accession>Q8ZQ34</accession>
<organism>
    <name type="scientific">Salmonella typhimurium (strain LT2 / SGSC1412 / ATCC 700720)</name>
    <dbReference type="NCBI Taxonomy" id="99287"/>
    <lineage>
        <taxon>Bacteria</taxon>
        <taxon>Pseudomonadati</taxon>
        <taxon>Pseudomonadota</taxon>
        <taxon>Gammaproteobacteria</taxon>
        <taxon>Enterobacterales</taxon>
        <taxon>Enterobacteriaceae</taxon>
        <taxon>Salmonella</taxon>
    </lineage>
</organism>
<sequence>MGMQMKNFKKMMTLMALCFSVAITTSGYATTLPDIPEPLKNGTGAIDNNGVIYVGLGTAGTSWYKIDLKKQHKDWERIKSFPGGAREQSVSVFLNDELYVFGGVGKKNSESPLQVYSDVYKYSPVKNTWQKVDTISPVGLTGHTGVKLNETMVLITGGVNEHIFDKYFIDIAAAAADESEKNKVIYNYFNKPAKDYFFNKIVFIYNAKENTWKNAGELPGAGTAGSSSVMGNNFLMLINGELKPGLRTDVIYRAMWDNDKLTWLKNSQLPPSPGEQQQEGLAGAFSGYSHGVLLVGGGANFPGAKQNYTNGKFYSHEGINKKWRDEVYGLINGHWQYMGKMKQPLGYGVSVSYGDEVFLIGGENAKGKPVSSVTSFTMRDGNLLIK</sequence>
<protein>
    <recommendedName>
        <fullName evidence="1">N-acetylneuraminate epimerase</fullName>
        <ecNumber evidence="1">5.1.3.24</ecNumber>
    </recommendedName>
    <alternativeName>
        <fullName evidence="1">N-acetylneuraminate mutarotase</fullName>
        <shortName evidence="1">Neu5Ac mutarotase</shortName>
    </alternativeName>
    <alternativeName>
        <fullName evidence="1">Sialic acid epimerase</fullName>
    </alternativeName>
</protein>
<keyword id="KW-0119">Carbohydrate metabolism</keyword>
<keyword id="KW-0413">Isomerase</keyword>
<keyword id="KW-0880">Kelch repeat</keyword>
<keyword id="KW-0574">Periplasm</keyword>
<keyword id="KW-1185">Reference proteome</keyword>
<keyword id="KW-0677">Repeat</keyword>
<keyword id="KW-0732">Signal</keyword>
<feature type="signal peptide" evidence="1">
    <location>
        <begin position="1"/>
        <end position="29"/>
    </location>
</feature>
<feature type="chain" id="PRO_0000333068" description="N-acetylneuraminate epimerase">
    <location>
        <begin position="30"/>
        <end position="386"/>
    </location>
</feature>
<feature type="repeat" description="Kelch 1">
    <location>
        <begin position="51"/>
        <end position="95"/>
    </location>
</feature>
<feature type="repeat" description="Kelch 2">
    <location>
        <begin position="97"/>
        <end position="149"/>
    </location>
</feature>
<feature type="repeat" description="Kelch 3">
    <location>
        <begin position="151"/>
        <end position="186"/>
    </location>
</feature>
<feature type="repeat" description="Kelch 4">
    <location>
        <begin position="187"/>
        <end position="232"/>
    </location>
</feature>
<feature type="repeat" description="Kelch 5">
    <location>
        <begin position="235"/>
        <end position="284"/>
    </location>
</feature>
<feature type="repeat" description="Kelch 6">
    <location>
        <begin position="306"/>
        <end position="355"/>
    </location>
</feature>
<feature type="repeat" description="Kelch 7">
    <location>
        <begin position="357"/>
        <end position="386"/>
    </location>
</feature>
<feature type="active site" description="Proton acceptor" evidence="1">
    <location>
        <position position="241"/>
    </location>
</feature>